<comment type="function">
    <text evidence="7">May act as a catecholamine-responsive trans-membrane electron transporter.</text>
</comment>
<comment type="cofactor">
    <cofactor evidence="1">
        <name>heme b</name>
        <dbReference type="ChEBI" id="CHEBI:60344"/>
    </cofactor>
    <text evidence="1">Binds 2 heme b groups non-covalently.</text>
</comment>
<comment type="subcellular location">
    <subcellularLocation>
        <location evidence="9">Membrane</location>
        <topology evidence="9">Multi-pass membrane protein</topology>
    </subcellularLocation>
</comment>
<comment type="domain">
    <text evidence="7 8">DOMON domain could bind catecholamines and thereby could regulate the cytochrome b561 domain function (PubMed:15022831). DOMON domain could bind one heme b (PubMed:19386804).</text>
</comment>
<gene>
    <name type="ordered locus">At5g54830</name>
    <name type="ORF">MBG8_9</name>
</gene>
<feature type="signal peptide" evidence="2">
    <location>
        <begin position="1"/>
        <end position="24"/>
    </location>
</feature>
<feature type="chain" id="PRO_0000430472" description="Cytochrome b561, DM13 and DOMON domain-containing protein At5g54830">
    <location>
        <begin position="25"/>
        <end position="907"/>
    </location>
</feature>
<feature type="transmembrane region" description="Helical; Name=1" evidence="2">
    <location>
        <begin position="685"/>
        <end position="705"/>
    </location>
</feature>
<feature type="transmembrane region" description="Helical; Name=2" evidence="2">
    <location>
        <begin position="730"/>
        <end position="750"/>
    </location>
</feature>
<feature type="transmembrane region" description="Helical; Name=3" evidence="2">
    <location>
        <begin position="754"/>
        <end position="774"/>
    </location>
</feature>
<feature type="transmembrane region" description="Helical; Name=4" evidence="2">
    <location>
        <begin position="795"/>
        <end position="815"/>
    </location>
</feature>
<feature type="transmembrane region" description="Helical; Name=5" evidence="2">
    <location>
        <begin position="829"/>
        <end position="849"/>
    </location>
</feature>
<feature type="domain" description="DM13" evidence="5">
    <location>
        <begin position="31"/>
        <end position="139"/>
    </location>
</feature>
<feature type="domain" description="DOMON 1" evidence="4">
    <location>
        <begin position="184"/>
        <end position="329"/>
    </location>
</feature>
<feature type="domain" description="DOMON 2" evidence="4">
    <location>
        <begin position="524"/>
        <end position="645"/>
    </location>
</feature>
<feature type="domain" description="Cytochrome b561" evidence="3">
    <location>
        <begin position="653"/>
        <end position="850"/>
    </location>
</feature>
<feature type="region of interest" description="Disordered" evidence="6">
    <location>
        <begin position="144"/>
        <end position="172"/>
    </location>
</feature>
<feature type="region of interest" description="Disordered" evidence="6">
    <location>
        <begin position="884"/>
        <end position="907"/>
    </location>
</feature>
<feature type="compositionally biased region" description="Polar residues" evidence="6">
    <location>
        <begin position="153"/>
        <end position="168"/>
    </location>
</feature>
<feature type="compositionally biased region" description="Basic and acidic residues" evidence="6">
    <location>
        <begin position="884"/>
        <end position="897"/>
    </location>
</feature>
<feature type="binding site" description="axial binding residue" evidence="1">
    <location>
        <position position="689"/>
    </location>
    <ligand>
        <name>heme b</name>
        <dbReference type="ChEBI" id="CHEBI:60344"/>
        <label>1</label>
    </ligand>
    <ligandPart>
        <name>Fe</name>
        <dbReference type="ChEBI" id="CHEBI:18248"/>
    </ligandPart>
</feature>
<feature type="binding site" description="axial binding residue" evidence="1">
    <location>
        <position position="723"/>
    </location>
    <ligand>
        <name>heme b</name>
        <dbReference type="ChEBI" id="CHEBI:60344"/>
        <label>2</label>
    </ligand>
    <ligandPart>
        <name>Fe</name>
        <dbReference type="ChEBI" id="CHEBI:18248"/>
    </ligandPart>
</feature>
<feature type="binding site" description="axial binding residue" evidence="1">
    <location>
        <position position="754"/>
    </location>
    <ligand>
        <name>heme b</name>
        <dbReference type="ChEBI" id="CHEBI:60344"/>
        <label>1</label>
    </ligand>
    <ligandPart>
        <name>Fe</name>
        <dbReference type="ChEBI" id="CHEBI:18248"/>
    </ligandPart>
</feature>
<feature type="binding site" description="axial binding residue" evidence="1">
    <location>
        <position position="796"/>
    </location>
    <ligand>
        <name>heme b</name>
        <dbReference type="ChEBI" id="CHEBI:60344"/>
        <label>2</label>
    </ligand>
    <ligandPart>
        <name>Fe</name>
        <dbReference type="ChEBI" id="CHEBI:18248"/>
    </ligandPart>
</feature>
<organism>
    <name type="scientific">Arabidopsis thaliana</name>
    <name type="common">Mouse-ear cress</name>
    <dbReference type="NCBI Taxonomy" id="3702"/>
    <lineage>
        <taxon>Eukaryota</taxon>
        <taxon>Viridiplantae</taxon>
        <taxon>Streptophyta</taxon>
        <taxon>Embryophyta</taxon>
        <taxon>Tracheophyta</taxon>
        <taxon>Spermatophyta</taxon>
        <taxon>Magnoliopsida</taxon>
        <taxon>eudicotyledons</taxon>
        <taxon>Gunneridae</taxon>
        <taxon>Pentapetalae</taxon>
        <taxon>rosids</taxon>
        <taxon>malvids</taxon>
        <taxon>Brassicales</taxon>
        <taxon>Brassicaceae</taxon>
        <taxon>Camelineae</taxon>
        <taxon>Arabidopsis</taxon>
    </lineage>
</organism>
<keyword id="KW-0249">Electron transport</keyword>
<keyword id="KW-0349">Heme</keyword>
<keyword id="KW-0408">Iron</keyword>
<keyword id="KW-0472">Membrane</keyword>
<keyword id="KW-0479">Metal-binding</keyword>
<keyword id="KW-1185">Reference proteome</keyword>
<keyword id="KW-0677">Repeat</keyword>
<keyword id="KW-0732">Signal</keyword>
<keyword id="KW-0812">Transmembrane</keyword>
<keyword id="KW-1133">Transmembrane helix</keyword>
<keyword id="KW-0813">Transport</keyword>
<dbReference type="EMBL" id="AB005232">
    <property type="protein sequence ID" value="BAB08762.1"/>
    <property type="molecule type" value="Genomic_DNA"/>
</dbReference>
<dbReference type="EMBL" id="CP002688">
    <property type="protein sequence ID" value="AED96545.1"/>
    <property type="molecule type" value="Genomic_DNA"/>
</dbReference>
<dbReference type="EMBL" id="AY090233">
    <property type="protein sequence ID" value="AAL90897.1"/>
    <property type="molecule type" value="mRNA"/>
</dbReference>
<dbReference type="EMBL" id="BT002628">
    <property type="protein sequence ID" value="AAO11544.1"/>
    <property type="molecule type" value="mRNA"/>
</dbReference>
<dbReference type="EMBL" id="AK227031">
    <property type="protein sequence ID" value="BAE99093.1"/>
    <property type="molecule type" value="mRNA"/>
</dbReference>
<dbReference type="RefSeq" id="NP_200294.1">
    <property type="nucleotide sequence ID" value="NM_124864.5"/>
</dbReference>
<dbReference type="SMR" id="Q9FFU6"/>
<dbReference type="FunCoup" id="Q9FFU6">
    <property type="interactions" value="580"/>
</dbReference>
<dbReference type="STRING" id="3702.Q9FFU6"/>
<dbReference type="iPTMnet" id="Q9FFU6"/>
<dbReference type="PaxDb" id="3702-AT5G54830.1"/>
<dbReference type="ProteomicsDB" id="241117"/>
<dbReference type="EnsemblPlants" id="AT5G54830.1">
    <property type="protein sequence ID" value="AT5G54830.1"/>
    <property type="gene ID" value="AT5G54830"/>
</dbReference>
<dbReference type="GeneID" id="835573"/>
<dbReference type="Gramene" id="AT5G54830.1">
    <property type="protein sequence ID" value="AT5G54830.1"/>
    <property type="gene ID" value="AT5G54830"/>
</dbReference>
<dbReference type="KEGG" id="ath:AT5G54830"/>
<dbReference type="Araport" id="AT5G54830"/>
<dbReference type="TAIR" id="AT5G54830"/>
<dbReference type="eggNOG" id="KOG4293">
    <property type="taxonomic scope" value="Eukaryota"/>
</dbReference>
<dbReference type="eggNOG" id="KOG4731">
    <property type="taxonomic scope" value="Eukaryota"/>
</dbReference>
<dbReference type="HOGENOM" id="CLU_340217_0_0_1"/>
<dbReference type="InParanoid" id="Q9FFU6"/>
<dbReference type="OMA" id="LTYVRCR"/>
<dbReference type="OrthoDB" id="2448405at2759"/>
<dbReference type="PhylomeDB" id="Q9FFU6"/>
<dbReference type="PRO" id="PR:Q9FFU6"/>
<dbReference type="Proteomes" id="UP000006548">
    <property type="component" value="Chromosome 5"/>
</dbReference>
<dbReference type="ExpressionAtlas" id="Q9FFU6">
    <property type="expression patterns" value="baseline and differential"/>
</dbReference>
<dbReference type="GO" id="GO:0005768">
    <property type="term" value="C:endosome"/>
    <property type="evidence" value="ECO:0007005"/>
    <property type="project" value="TAIR"/>
</dbReference>
<dbReference type="GO" id="GO:0005794">
    <property type="term" value="C:Golgi apparatus"/>
    <property type="evidence" value="ECO:0007005"/>
    <property type="project" value="TAIR"/>
</dbReference>
<dbReference type="GO" id="GO:0016020">
    <property type="term" value="C:membrane"/>
    <property type="evidence" value="ECO:0007669"/>
    <property type="project" value="UniProtKB-SubCell"/>
</dbReference>
<dbReference type="GO" id="GO:0005802">
    <property type="term" value="C:trans-Golgi network"/>
    <property type="evidence" value="ECO:0007005"/>
    <property type="project" value="TAIR"/>
</dbReference>
<dbReference type="GO" id="GO:0046872">
    <property type="term" value="F:metal ion binding"/>
    <property type="evidence" value="ECO:0007669"/>
    <property type="project" value="UniProtKB-KW"/>
</dbReference>
<dbReference type="CDD" id="cd08760">
    <property type="entry name" value="Cyt_b561_FRRS1_like"/>
    <property type="match status" value="1"/>
</dbReference>
<dbReference type="CDD" id="cd09631">
    <property type="entry name" value="DOMON_DOH"/>
    <property type="match status" value="2"/>
</dbReference>
<dbReference type="FunFam" id="1.20.120.1770:FF:000010">
    <property type="entry name" value="DOMON domain-containing protein"/>
    <property type="match status" value="1"/>
</dbReference>
<dbReference type="Gene3D" id="1.20.120.1770">
    <property type="match status" value="1"/>
</dbReference>
<dbReference type="InterPro" id="IPR045879">
    <property type="entry name" value="B561A"/>
</dbReference>
<dbReference type="InterPro" id="IPR006593">
    <property type="entry name" value="Cyt_b561/ferric_Rdtase_TM"/>
</dbReference>
<dbReference type="InterPro" id="IPR019545">
    <property type="entry name" value="DM13_domain"/>
</dbReference>
<dbReference type="InterPro" id="IPR045266">
    <property type="entry name" value="DOH_DOMON"/>
</dbReference>
<dbReference type="InterPro" id="IPR005018">
    <property type="entry name" value="DOMON_domain"/>
</dbReference>
<dbReference type="PANTHER" id="PTHR47281">
    <property type="entry name" value="OS09G0557700 PROTEIN"/>
    <property type="match status" value="1"/>
</dbReference>
<dbReference type="PANTHER" id="PTHR47281:SF1">
    <property type="entry name" value="OS09G0557700 PROTEIN"/>
    <property type="match status" value="1"/>
</dbReference>
<dbReference type="Pfam" id="PF25489">
    <property type="entry name" value="At5g54830"/>
    <property type="match status" value="1"/>
</dbReference>
<dbReference type="Pfam" id="PF03188">
    <property type="entry name" value="Cytochrom_B561"/>
    <property type="match status" value="1"/>
</dbReference>
<dbReference type="Pfam" id="PF10517">
    <property type="entry name" value="DM13"/>
    <property type="match status" value="1"/>
</dbReference>
<dbReference type="Pfam" id="PF03351">
    <property type="entry name" value="DOMON"/>
    <property type="match status" value="2"/>
</dbReference>
<dbReference type="SMART" id="SM00665">
    <property type="entry name" value="B561"/>
    <property type="match status" value="1"/>
</dbReference>
<dbReference type="SMART" id="SM00686">
    <property type="entry name" value="DM13"/>
    <property type="match status" value="1"/>
</dbReference>
<dbReference type="SMART" id="SM00664">
    <property type="entry name" value="DoH"/>
    <property type="match status" value="2"/>
</dbReference>
<dbReference type="PROSITE" id="PS50939">
    <property type="entry name" value="CYTOCHROME_B561"/>
    <property type="match status" value="1"/>
</dbReference>
<dbReference type="PROSITE" id="PS51549">
    <property type="entry name" value="DM13"/>
    <property type="match status" value="1"/>
</dbReference>
<dbReference type="PROSITE" id="PS50836">
    <property type="entry name" value="DOMON"/>
    <property type="match status" value="2"/>
</dbReference>
<proteinExistence type="evidence at transcript level"/>
<name>B561A_ARATH</name>
<accession>Q9FFU6</accession>
<reference key="1">
    <citation type="journal article" date="1997" name="DNA Res.">
        <title>Structural analysis of Arabidopsis thaliana chromosome 5. I. Sequence features of the 1.6 Mb regions covered by twenty physically assigned P1 clones.</title>
        <authorList>
            <person name="Sato S."/>
            <person name="Kotani H."/>
            <person name="Nakamura Y."/>
            <person name="Kaneko T."/>
            <person name="Asamizu E."/>
            <person name="Fukami M."/>
            <person name="Miyajima N."/>
            <person name="Tabata S."/>
        </authorList>
    </citation>
    <scope>NUCLEOTIDE SEQUENCE [LARGE SCALE GENOMIC DNA]</scope>
    <source>
        <strain>cv. Columbia</strain>
    </source>
</reference>
<reference key="2">
    <citation type="journal article" date="2017" name="Plant J.">
        <title>Araport11: a complete reannotation of the Arabidopsis thaliana reference genome.</title>
        <authorList>
            <person name="Cheng C.Y."/>
            <person name="Krishnakumar V."/>
            <person name="Chan A.P."/>
            <person name="Thibaud-Nissen F."/>
            <person name="Schobel S."/>
            <person name="Town C.D."/>
        </authorList>
    </citation>
    <scope>GENOME REANNOTATION</scope>
    <source>
        <strain>cv. Columbia</strain>
    </source>
</reference>
<reference key="3">
    <citation type="journal article" date="2003" name="Science">
        <title>Empirical analysis of transcriptional activity in the Arabidopsis genome.</title>
        <authorList>
            <person name="Yamada K."/>
            <person name="Lim J."/>
            <person name="Dale J.M."/>
            <person name="Chen H."/>
            <person name="Shinn P."/>
            <person name="Palm C.J."/>
            <person name="Southwick A.M."/>
            <person name="Wu H.C."/>
            <person name="Kim C.J."/>
            <person name="Nguyen M."/>
            <person name="Pham P.K."/>
            <person name="Cheuk R.F."/>
            <person name="Karlin-Newmann G."/>
            <person name="Liu S.X."/>
            <person name="Lam B."/>
            <person name="Sakano H."/>
            <person name="Wu T."/>
            <person name="Yu G."/>
            <person name="Miranda M."/>
            <person name="Quach H.L."/>
            <person name="Tripp M."/>
            <person name="Chang C.H."/>
            <person name="Lee J.M."/>
            <person name="Toriumi M.J."/>
            <person name="Chan M.M."/>
            <person name="Tang C.C."/>
            <person name="Onodera C.S."/>
            <person name="Deng J.M."/>
            <person name="Akiyama K."/>
            <person name="Ansari Y."/>
            <person name="Arakawa T."/>
            <person name="Banh J."/>
            <person name="Banno F."/>
            <person name="Bowser L."/>
            <person name="Brooks S.Y."/>
            <person name="Carninci P."/>
            <person name="Chao Q."/>
            <person name="Choy N."/>
            <person name="Enju A."/>
            <person name="Goldsmith A.D."/>
            <person name="Gurjal M."/>
            <person name="Hansen N.F."/>
            <person name="Hayashizaki Y."/>
            <person name="Johnson-Hopson C."/>
            <person name="Hsuan V.W."/>
            <person name="Iida K."/>
            <person name="Karnes M."/>
            <person name="Khan S."/>
            <person name="Koesema E."/>
            <person name="Ishida J."/>
            <person name="Jiang P.X."/>
            <person name="Jones T."/>
            <person name="Kawai J."/>
            <person name="Kamiya A."/>
            <person name="Meyers C."/>
            <person name="Nakajima M."/>
            <person name="Narusaka M."/>
            <person name="Seki M."/>
            <person name="Sakurai T."/>
            <person name="Satou M."/>
            <person name="Tamse R."/>
            <person name="Vaysberg M."/>
            <person name="Wallender E.K."/>
            <person name="Wong C."/>
            <person name="Yamamura Y."/>
            <person name="Yuan S."/>
            <person name="Shinozaki K."/>
            <person name="Davis R.W."/>
            <person name="Theologis A."/>
            <person name="Ecker J.R."/>
        </authorList>
    </citation>
    <scope>NUCLEOTIDE SEQUENCE [LARGE SCALE MRNA]</scope>
    <source>
        <strain>cv. Columbia</strain>
    </source>
</reference>
<reference key="4">
    <citation type="submission" date="2006-07" db="EMBL/GenBank/DDBJ databases">
        <title>Large-scale analysis of RIKEN Arabidopsis full-length (RAFL) cDNAs.</title>
        <authorList>
            <person name="Totoki Y."/>
            <person name="Seki M."/>
            <person name="Ishida J."/>
            <person name="Nakajima M."/>
            <person name="Enju A."/>
            <person name="Kamiya A."/>
            <person name="Narusaka M."/>
            <person name="Shin-i T."/>
            <person name="Nakagawa M."/>
            <person name="Sakamoto N."/>
            <person name="Oishi K."/>
            <person name="Kohara Y."/>
            <person name="Kobayashi M."/>
            <person name="Toyoda A."/>
            <person name="Sakaki Y."/>
            <person name="Sakurai T."/>
            <person name="Iida K."/>
            <person name="Akiyama K."/>
            <person name="Satou M."/>
            <person name="Toyoda T."/>
            <person name="Konagaya A."/>
            <person name="Carninci P."/>
            <person name="Kawai J."/>
            <person name="Hayashizaki Y."/>
            <person name="Shinozaki K."/>
        </authorList>
    </citation>
    <scope>NUCLEOTIDE SEQUENCE [LARGE SCALE MRNA]</scope>
    <source>
        <strain>cv. Columbia</strain>
    </source>
</reference>
<reference key="5">
    <citation type="journal article" date="2004" name="J. Plant Physiol.">
        <title>Analysis of an Arabidopsis thaliana protein family, structurally related to cytochromes b561 and potentially involved in catecholamine biochemistry in plants.</title>
        <authorList>
            <person name="Verelst W."/>
            <person name="Asard H."/>
        </authorList>
    </citation>
    <scope>DOMAIN</scope>
    <scope>FUNCTION</scope>
</reference>
<reference key="6">
    <citation type="journal article" date="2005" name="Biochim. Biophys. Acta">
        <title>Cytochrome b561 protein family: expanding roles and versatile transmembrane electron transfer abilities as predicted by a new classification system and protein sequence motif analyses.</title>
        <authorList>
            <person name="Tsubaki M."/>
            <person name="Takeuchi F."/>
            <person name="Nakanishi N."/>
        </authorList>
    </citation>
    <scope>GENE FAMILY</scope>
    <scope>NOMENCLATURE</scope>
</reference>
<reference key="7">
    <citation type="journal article" date="2009" name="Plant Physiol.">
        <title>Auxin-responsive genes AIR12 code for a new family of plasma membrane b-type cytochromes specific to flowering plants.</title>
        <authorList>
            <person name="Preger V."/>
            <person name="Tango N."/>
            <person name="Marchand C."/>
            <person name="Lemaire S.D."/>
            <person name="Carbonera D."/>
            <person name="Di Valentin M."/>
            <person name="Costa A."/>
            <person name="Pupillo P."/>
            <person name="Trost P."/>
        </authorList>
    </citation>
    <scope>DOMAIN</scope>
</reference>
<reference key="8">
    <citation type="journal article" date="2013" name="Antioxid. Redox Signal.">
        <title>Cytochromes b561: ascorbate-mediated trans-membrane electron transport.</title>
        <authorList>
            <person name="Asard H."/>
            <person name="Barbaro R."/>
            <person name="Trost P."/>
            <person name="Berczi A."/>
        </authorList>
    </citation>
    <scope>REVIEW</scope>
</reference>
<protein>
    <recommendedName>
        <fullName>Cytochrome b561, DM13 and DOMON domain-containing protein At5g54830</fullName>
    </recommendedName>
    <alternativeName>
        <fullName>Protein b561A.tha1</fullName>
    </alternativeName>
</protein>
<sequence>MCDQRPNLLGSLVLLGFFIFFVNGEECSNSSSLIGHESEFKMLQHQLRGVFTVVDDCSFRVSRFDMLSGSEVHWWGAMSSDFDNMTNDGFVISDQKLNQTFKNSSFIVRLLGNVTWDKLGVVSVWDLPTASDFGHVLLSNATESDTSKAESPPSESNDVAPGKSNNSEPFKAPTMFDNCKKLSDKYRLRWSLNAEKGYVDIGLEATTGLLNYMAFGWAKPNSTSNLMLNADVVVTGIREDGFPFADDFYITESSVCSVKEGTATGVCPDTVYEEADSVGSSVNNTKLVYGHRIDGVSFVRYRRPLNDSDNKFDFPVNSTESLTVIWALGVIKPPDVINPYYLPVNHGGVESENFGHFSLNLSDHVDECLGPLDADNKYDQDVIIADAHAPLVVTAGPSVHYPNPPNPSKVLYINKKEAPVLKVERGVPVKFSIEAGHDVSFYITSDFLGGNASLRNRTETIYAGGQETHGVLSSPSELVWAPNRNTPDQLYYHSIFQEKMGWKVQVVDGGLSDMYNNSVNLDDQQVKFFWTIVGDSISIAARGEKKSGYLAIGFGSEMTNSYAYIGWFDRNGTGHVNTYWIDGESASAVHPTTENMTYVRCKSEEGIITLEFTRPLKPSCSHRDRPECKNMIDPTTPLKVIWAMGAKWTDGQLTERNMHSVTSQRPVRVMLTRGSAEADQDLRPVLGVHGFMMFLAWGILLPGGILSARYLKHIKGDGWFKIHMYLQCSGLAIVFLGLLFAVAELNGFSFSSTHVKFGFTAIVLACAQPVNAWLRPAKPAQGELISSKRLIWEYSHSIVGQSAVVVGVVALFTGMKHLGERNGTENVDGLNLALGLWVFLCVVTVAYLEYRERGRRRARNLSRGNWVLGNVEEDDSIDLIDSRGGFRDKDDEDRNGGRMEIQLEPLK</sequence>
<evidence type="ECO:0000250" key="1">
    <source>
        <dbReference type="UniProtKB" id="Q9SWS1"/>
    </source>
</evidence>
<evidence type="ECO:0000255" key="2"/>
<evidence type="ECO:0000255" key="3">
    <source>
        <dbReference type="PROSITE-ProRule" id="PRU00242"/>
    </source>
</evidence>
<evidence type="ECO:0000255" key="4">
    <source>
        <dbReference type="PROSITE-ProRule" id="PRU00246"/>
    </source>
</evidence>
<evidence type="ECO:0000255" key="5">
    <source>
        <dbReference type="PROSITE-ProRule" id="PRU00882"/>
    </source>
</evidence>
<evidence type="ECO:0000256" key="6">
    <source>
        <dbReference type="SAM" id="MobiDB-lite"/>
    </source>
</evidence>
<evidence type="ECO:0000269" key="7">
    <source>
    </source>
</evidence>
<evidence type="ECO:0000269" key="8">
    <source>
    </source>
</evidence>
<evidence type="ECO:0000305" key="9"/>